<sequence>MASKIETLKANLEAALGARAVSLVEAVGELTLVVKASDYLEVAKQLRDDRSLGFEQLIDLCGVDYQTYGDGAYDGPRFAAVLHLLSVANNWRLRVRVFASDDDLPIVPSVVDIWNSANWYEREAFDLYGIVFEGHPDLRRILTDYGFIGHPFRKDFPVSGYVEMRYDPQEKRVVYQPVTIEPREITPRVIREDRYGGLKH</sequence>
<protein>
    <recommendedName>
        <fullName evidence="1">NADH-quinone oxidoreductase subunit C</fullName>
        <ecNumber evidence="1">7.1.1.-</ecNumber>
    </recommendedName>
    <alternativeName>
        <fullName evidence="1">NADH dehydrogenase I subunit C</fullName>
    </alternativeName>
    <alternativeName>
        <fullName evidence="1">NDH-1 subunit C</fullName>
    </alternativeName>
</protein>
<evidence type="ECO:0000255" key="1">
    <source>
        <dbReference type="HAMAP-Rule" id="MF_01357"/>
    </source>
</evidence>
<accession>A3N7L9</accession>
<comment type="function">
    <text evidence="1">NDH-1 shuttles electrons from NADH, via FMN and iron-sulfur (Fe-S) centers, to quinones in the respiratory chain. The immediate electron acceptor for the enzyme in this species is believed to be ubiquinone. Couples the redox reaction to proton translocation (for every two electrons transferred, four hydrogen ions are translocated across the cytoplasmic membrane), and thus conserves the redox energy in a proton gradient.</text>
</comment>
<comment type="catalytic activity">
    <reaction evidence="1">
        <text>a quinone + NADH + 5 H(+)(in) = a quinol + NAD(+) + 4 H(+)(out)</text>
        <dbReference type="Rhea" id="RHEA:57888"/>
        <dbReference type="ChEBI" id="CHEBI:15378"/>
        <dbReference type="ChEBI" id="CHEBI:24646"/>
        <dbReference type="ChEBI" id="CHEBI:57540"/>
        <dbReference type="ChEBI" id="CHEBI:57945"/>
        <dbReference type="ChEBI" id="CHEBI:132124"/>
    </reaction>
</comment>
<comment type="subunit">
    <text evidence="1">NDH-1 is composed of 14 different subunits. Subunits NuoB, C, D, E, F, and G constitute the peripheral sector of the complex.</text>
</comment>
<comment type="subcellular location">
    <subcellularLocation>
        <location evidence="1">Cell inner membrane</location>
        <topology evidence="1">Peripheral membrane protein</topology>
        <orientation evidence="1">Cytoplasmic side</orientation>
    </subcellularLocation>
</comment>
<comment type="similarity">
    <text evidence="1">Belongs to the complex I 30 kDa subunit family.</text>
</comment>
<proteinExistence type="inferred from homology"/>
<dbReference type="EC" id="7.1.1.-" evidence="1"/>
<dbReference type="EMBL" id="CP000570">
    <property type="protein sequence ID" value="ABN83555.1"/>
    <property type="molecule type" value="Genomic_DNA"/>
</dbReference>
<dbReference type="RefSeq" id="WP_004186121.1">
    <property type="nucleotide sequence ID" value="NC_009074.1"/>
</dbReference>
<dbReference type="SMR" id="A3N7L9"/>
<dbReference type="KEGG" id="bpd:BURPS668_1292"/>
<dbReference type="HOGENOM" id="CLU_042628_2_1_4"/>
<dbReference type="GO" id="GO:0005886">
    <property type="term" value="C:plasma membrane"/>
    <property type="evidence" value="ECO:0007669"/>
    <property type="project" value="UniProtKB-SubCell"/>
</dbReference>
<dbReference type="GO" id="GO:0008137">
    <property type="term" value="F:NADH dehydrogenase (ubiquinone) activity"/>
    <property type="evidence" value="ECO:0007669"/>
    <property type="project" value="InterPro"/>
</dbReference>
<dbReference type="GO" id="GO:0050136">
    <property type="term" value="F:NADH:ubiquinone reductase (non-electrogenic) activity"/>
    <property type="evidence" value="ECO:0007669"/>
    <property type="project" value="UniProtKB-UniRule"/>
</dbReference>
<dbReference type="GO" id="GO:0048038">
    <property type="term" value="F:quinone binding"/>
    <property type="evidence" value="ECO:0007669"/>
    <property type="project" value="UniProtKB-KW"/>
</dbReference>
<dbReference type="Gene3D" id="3.30.460.80">
    <property type="entry name" value="NADH:ubiquinone oxidoreductase, 30kDa subunit"/>
    <property type="match status" value="1"/>
</dbReference>
<dbReference type="HAMAP" id="MF_01357">
    <property type="entry name" value="NDH1_NuoC"/>
    <property type="match status" value="1"/>
</dbReference>
<dbReference type="InterPro" id="IPR010218">
    <property type="entry name" value="NADH_DH_suC"/>
</dbReference>
<dbReference type="InterPro" id="IPR037232">
    <property type="entry name" value="NADH_quin_OxRdtase_su_C/D-like"/>
</dbReference>
<dbReference type="InterPro" id="IPR001268">
    <property type="entry name" value="NADH_UbQ_OxRdtase_30kDa_su"/>
</dbReference>
<dbReference type="InterPro" id="IPR020396">
    <property type="entry name" value="NADH_UbQ_OxRdtase_CS"/>
</dbReference>
<dbReference type="NCBIfam" id="TIGR01961">
    <property type="entry name" value="NuoC_fam"/>
    <property type="match status" value="1"/>
</dbReference>
<dbReference type="NCBIfam" id="NF004730">
    <property type="entry name" value="PRK06074.1-1"/>
    <property type="match status" value="1"/>
</dbReference>
<dbReference type="PANTHER" id="PTHR10884:SF14">
    <property type="entry name" value="NADH DEHYDROGENASE [UBIQUINONE] IRON-SULFUR PROTEIN 3, MITOCHONDRIAL"/>
    <property type="match status" value="1"/>
</dbReference>
<dbReference type="PANTHER" id="PTHR10884">
    <property type="entry name" value="NADH DEHYDROGENASE UBIQUINONE IRON-SULFUR PROTEIN 3"/>
    <property type="match status" value="1"/>
</dbReference>
<dbReference type="Pfam" id="PF00329">
    <property type="entry name" value="Complex1_30kDa"/>
    <property type="match status" value="1"/>
</dbReference>
<dbReference type="SUPFAM" id="SSF143243">
    <property type="entry name" value="Nqo5-like"/>
    <property type="match status" value="1"/>
</dbReference>
<dbReference type="PROSITE" id="PS00542">
    <property type="entry name" value="COMPLEX1_30K"/>
    <property type="match status" value="1"/>
</dbReference>
<keyword id="KW-0997">Cell inner membrane</keyword>
<keyword id="KW-1003">Cell membrane</keyword>
<keyword id="KW-0472">Membrane</keyword>
<keyword id="KW-0520">NAD</keyword>
<keyword id="KW-0874">Quinone</keyword>
<keyword id="KW-1278">Translocase</keyword>
<keyword id="KW-0813">Transport</keyword>
<keyword id="KW-0830">Ubiquinone</keyword>
<feature type="chain" id="PRO_0000358074" description="NADH-quinone oxidoreductase subunit C">
    <location>
        <begin position="1"/>
        <end position="200"/>
    </location>
</feature>
<reference key="1">
    <citation type="journal article" date="2010" name="Genome Biol. Evol.">
        <title>Continuing evolution of Burkholderia mallei through genome reduction and large-scale rearrangements.</title>
        <authorList>
            <person name="Losada L."/>
            <person name="Ronning C.M."/>
            <person name="DeShazer D."/>
            <person name="Woods D."/>
            <person name="Fedorova N."/>
            <person name="Kim H.S."/>
            <person name="Shabalina S.A."/>
            <person name="Pearson T.R."/>
            <person name="Brinkac L."/>
            <person name="Tan P."/>
            <person name="Nandi T."/>
            <person name="Crabtree J."/>
            <person name="Badger J."/>
            <person name="Beckstrom-Sternberg S."/>
            <person name="Saqib M."/>
            <person name="Schutzer S.E."/>
            <person name="Keim P."/>
            <person name="Nierman W.C."/>
        </authorList>
    </citation>
    <scope>NUCLEOTIDE SEQUENCE [LARGE SCALE GENOMIC DNA]</scope>
    <source>
        <strain>668</strain>
    </source>
</reference>
<name>NUOC_BURP6</name>
<organism>
    <name type="scientific">Burkholderia pseudomallei (strain 668)</name>
    <dbReference type="NCBI Taxonomy" id="320373"/>
    <lineage>
        <taxon>Bacteria</taxon>
        <taxon>Pseudomonadati</taxon>
        <taxon>Pseudomonadota</taxon>
        <taxon>Betaproteobacteria</taxon>
        <taxon>Burkholderiales</taxon>
        <taxon>Burkholderiaceae</taxon>
        <taxon>Burkholderia</taxon>
        <taxon>pseudomallei group</taxon>
    </lineage>
</organism>
<gene>
    <name evidence="1" type="primary">nuoC</name>
    <name type="ordered locus">BURPS668_1292</name>
</gene>